<accession>Q8PD48</accession>
<name>PUR2_XANCP</name>
<organism>
    <name type="scientific">Xanthomonas campestris pv. campestris (strain ATCC 33913 / DSM 3586 / NCPPB 528 / LMG 568 / P 25)</name>
    <dbReference type="NCBI Taxonomy" id="190485"/>
    <lineage>
        <taxon>Bacteria</taxon>
        <taxon>Pseudomonadati</taxon>
        <taxon>Pseudomonadota</taxon>
        <taxon>Gammaproteobacteria</taxon>
        <taxon>Lysobacterales</taxon>
        <taxon>Lysobacteraceae</taxon>
        <taxon>Xanthomonas</taxon>
    </lineage>
</organism>
<gene>
    <name evidence="2" type="primary">purD</name>
    <name type="ordered locus">XCC0497</name>
</gene>
<proteinExistence type="inferred from homology"/>
<feature type="chain" id="PRO_0000151503" description="Phosphoribosylamine--glycine ligase">
    <location>
        <begin position="1"/>
        <end position="431"/>
    </location>
</feature>
<feature type="domain" description="ATP-grasp" evidence="2">
    <location>
        <begin position="109"/>
        <end position="316"/>
    </location>
</feature>
<feature type="binding site" evidence="2">
    <location>
        <begin position="135"/>
        <end position="196"/>
    </location>
    <ligand>
        <name>ATP</name>
        <dbReference type="ChEBI" id="CHEBI:30616"/>
    </ligand>
</feature>
<feature type="binding site" evidence="2">
    <location>
        <position position="286"/>
    </location>
    <ligand>
        <name>Mg(2+)</name>
        <dbReference type="ChEBI" id="CHEBI:18420"/>
    </ligand>
</feature>
<feature type="binding site" evidence="2">
    <location>
        <position position="288"/>
    </location>
    <ligand>
        <name>Mg(2+)</name>
        <dbReference type="ChEBI" id="CHEBI:18420"/>
    </ligand>
</feature>
<keyword id="KW-0067">ATP-binding</keyword>
<keyword id="KW-0436">Ligase</keyword>
<keyword id="KW-0460">Magnesium</keyword>
<keyword id="KW-0464">Manganese</keyword>
<keyword id="KW-0479">Metal-binding</keyword>
<keyword id="KW-0547">Nucleotide-binding</keyword>
<keyword id="KW-0658">Purine biosynthesis</keyword>
<keyword id="KW-1185">Reference proteome</keyword>
<protein>
    <recommendedName>
        <fullName evidence="2">Phosphoribosylamine--glycine ligase</fullName>
        <ecNumber evidence="2">6.3.4.13</ecNumber>
    </recommendedName>
    <alternativeName>
        <fullName evidence="2">GARS</fullName>
    </alternativeName>
    <alternativeName>
        <fullName evidence="2">Glycinamide ribonucleotide synthetase</fullName>
    </alternativeName>
    <alternativeName>
        <fullName evidence="2">Phosphoribosylglycinamide synthetase</fullName>
    </alternativeName>
</protein>
<reference key="1">
    <citation type="journal article" date="2002" name="Nature">
        <title>Comparison of the genomes of two Xanthomonas pathogens with differing host specificities.</title>
        <authorList>
            <person name="da Silva A.C.R."/>
            <person name="Ferro J.A."/>
            <person name="Reinach F.C."/>
            <person name="Farah C.S."/>
            <person name="Furlan L.R."/>
            <person name="Quaggio R.B."/>
            <person name="Monteiro-Vitorello C.B."/>
            <person name="Van Sluys M.A."/>
            <person name="Almeida N.F. Jr."/>
            <person name="Alves L.M.C."/>
            <person name="do Amaral A.M."/>
            <person name="Bertolini M.C."/>
            <person name="Camargo L.E.A."/>
            <person name="Camarotte G."/>
            <person name="Cannavan F."/>
            <person name="Cardozo J."/>
            <person name="Chambergo F."/>
            <person name="Ciapina L.P."/>
            <person name="Cicarelli R.M.B."/>
            <person name="Coutinho L.L."/>
            <person name="Cursino-Santos J.R."/>
            <person name="El-Dorry H."/>
            <person name="Faria J.B."/>
            <person name="Ferreira A.J.S."/>
            <person name="Ferreira R.C.C."/>
            <person name="Ferro M.I.T."/>
            <person name="Formighieri E.F."/>
            <person name="Franco M.C."/>
            <person name="Greggio C.C."/>
            <person name="Gruber A."/>
            <person name="Katsuyama A.M."/>
            <person name="Kishi L.T."/>
            <person name="Leite R.P."/>
            <person name="Lemos E.G.M."/>
            <person name="Lemos M.V.F."/>
            <person name="Locali E.C."/>
            <person name="Machado M.A."/>
            <person name="Madeira A.M.B.N."/>
            <person name="Martinez-Rossi N.M."/>
            <person name="Martins E.C."/>
            <person name="Meidanis J."/>
            <person name="Menck C.F.M."/>
            <person name="Miyaki C.Y."/>
            <person name="Moon D.H."/>
            <person name="Moreira L.M."/>
            <person name="Novo M.T.M."/>
            <person name="Okura V.K."/>
            <person name="Oliveira M.C."/>
            <person name="Oliveira V.R."/>
            <person name="Pereira H.A."/>
            <person name="Rossi A."/>
            <person name="Sena J.A.D."/>
            <person name="Silva C."/>
            <person name="de Souza R.F."/>
            <person name="Spinola L.A.F."/>
            <person name="Takita M.A."/>
            <person name="Tamura R.E."/>
            <person name="Teixeira E.C."/>
            <person name="Tezza R.I.D."/>
            <person name="Trindade dos Santos M."/>
            <person name="Truffi D."/>
            <person name="Tsai S.M."/>
            <person name="White F.F."/>
            <person name="Setubal J.C."/>
            <person name="Kitajima J.P."/>
        </authorList>
    </citation>
    <scope>NUCLEOTIDE SEQUENCE [LARGE SCALE GENOMIC DNA]</scope>
    <source>
        <strain>ATCC 33913 / DSM 3586 / NCPPB 528 / LMG 568 / P 25</strain>
    </source>
</reference>
<comment type="catalytic activity">
    <reaction evidence="2">
        <text>5-phospho-beta-D-ribosylamine + glycine + ATP = N(1)-(5-phospho-beta-D-ribosyl)glycinamide + ADP + phosphate + H(+)</text>
        <dbReference type="Rhea" id="RHEA:17453"/>
        <dbReference type="ChEBI" id="CHEBI:15378"/>
        <dbReference type="ChEBI" id="CHEBI:30616"/>
        <dbReference type="ChEBI" id="CHEBI:43474"/>
        <dbReference type="ChEBI" id="CHEBI:57305"/>
        <dbReference type="ChEBI" id="CHEBI:58681"/>
        <dbReference type="ChEBI" id="CHEBI:143788"/>
        <dbReference type="ChEBI" id="CHEBI:456216"/>
        <dbReference type="EC" id="6.3.4.13"/>
    </reaction>
</comment>
<comment type="cofactor">
    <cofactor evidence="1">
        <name>Mg(2+)</name>
        <dbReference type="ChEBI" id="CHEBI:18420"/>
    </cofactor>
    <cofactor evidence="1">
        <name>Mn(2+)</name>
        <dbReference type="ChEBI" id="CHEBI:29035"/>
    </cofactor>
    <text evidence="1">Binds 1 Mg(2+) or Mn(2+) ion per subunit.</text>
</comment>
<comment type="pathway">
    <text evidence="2">Purine metabolism; IMP biosynthesis via de novo pathway; N(1)-(5-phospho-D-ribosyl)glycinamide from 5-phospho-alpha-D-ribose 1-diphosphate: step 2/2.</text>
</comment>
<comment type="similarity">
    <text evidence="2">Belongs to the GARS family.</text>
</comment>
<dbReference type="EC" id="6.3.4.13" evidence="2"/>
<dbReference type="EMBL" id="AE008922">
    <property type="protein sequence ID" value="AAM39813.1"/>
    <property type="molecule type" value="Genomic_DNA"/>
</dbReference>
<dbReference type="RefSeq" id="NP_635889.1">
    <property type="nucleotide sequence ID" value="NC_003902.1"/>
</dbReference>
<dbReference type="RefSeq" id="WP_011035746.1">
    <property type="nucleotide sequence ID" value="NC_003902.1"/>
</dbReference>
<dbReference type="SMR" id="Q8PD48"/>
<dbReference type="STRING" id="190485.XCC0497"/>
<dbReference type="EnsemblBacteria" id="AAM39813">
    <property type="protein sequence ID" value="AAM39813"/>
    <property type="gene ID" value="XCC0497"/>
</dbReference>
<dbReference type="KEGG" id="xcc:XCC0497"/>
<dbReference type="PATRIC" id="fig|190485.4.peg.544"/>
<dbReference type="eggNOG" id="COG0151">
    <property type="taxonomic scope" value="Bacteria"/>
</dbReference>
<dbReference type="HOGENOM" id="CLU_027420_3_1_6"/>
<dbReference type="OrthoDB" id="9807240at2"/>
<dbReference type="UniPathway" id="UPA00074">
    <property type="reaction ID" value="UER00125"/>
</dbReference>
<dbReference type="Proteomes" id="UP000001010">
    <property type="component" value="Chromosome"/>
</dbReference>
<dbReference type="GO" id="GO:0005524">
    <property type="term" value="F:ATP binding"/>
    <property type="evidence" value="ECO:0007669"/>
    <property type="project" value="UniProtKB-KW"/>
</dbReference>
<dbReference type="GO" id="GO:0046872">
    <property type="term" value="F:metal ion binding"/>
    <property type="evidence" value="ECO:0007669"/>
    <property type="project" value="UniProtKB-KW"/>
</dbReference>
<dbReference type="GO" id="GO:0004637">
    <property type="term" value="F:phosphoribosylamine-glycine ligase activity"/>
    <property type="evidence" value="ECO:0007669"/>
    <property type="project" value="UniProtKB-UniRule"/>
</dbReference>
<dbReference type="GO" id="GO:0006189">
    <property type="term" value="P:'de novo' IMP biosynthetic process"/>
    <property type="evidence" value="ECO:0007669"/>
    <property type="project" value="UniProtKB-UniRule"/>
</dbReference>
<dbReference type="GO" id="GO:0009113">
    <property type="term" value="P:purine nucleobase biosynthetic process"/>
    <property type="evidence" value="ECO:0007669"/>
    <property type="project" value="InterPro"/>
</dbReference>
<dbReference type="FunFam" id="3.30.470.20:FF:000031">
    <property type="entry name" value="Phosphoribosylamine--glycine ligase"/>
    <property type="match status" value="1"/>
</dbReference>
<dbReference type="FunFam" id="3.40.50.20:FF:000006">
    <property type="entry name" value="Phosphoribosylamine--glycine ligase, chloroplastic"/>
    <property type="match status" value="1"/>
</dbReference>
<dbReference type="FunFam" id="3.30.1490.20:FF:000006">
    <property type="entry name" value="phosphoribosylamine--glycine ligase, chloroplastic-like"/>
    <property type="match status" value="1"/>
</dbReference>
<dbReference type="Gene3D" id="3.40.50.20">
    <property type="match status" value="1"/>
</dbReference>
<dbReference type="Gene3D" id="3.30.1490.20">
    <property type="entry name" value="ATP-grasp fold, A domain"/>
    <property type="match status" value="1"/>
</dbReference>
<dbReference type="Gene3D" id="3.30.470.20">
    <property type="entry name" value="ATP-grasp fold, B domain"/>
    <property type="match status" value="1"/>
</dbReference>
<dbReference type="Gene3D" id="3.90.600.10">
    <property type="entry name" value="Phosphoribosylglycinamide synthetase, C-terminal domain"/>
    <property type="match status" value="1"/>
</dbReference>
<dbReference type="HAMAP" id="MF_00138">
    <property type="entry name" value="GARS"/>
    <property type="match status" value="1"/>
</dbReference>
<dbReference type="InterPro" id="IPR011761">
    <property type="entry name" value="ATP-grasp"/>
</dbReference>
<dbReference type="InterPro" id="IPR013815">
    <property type="entry name" value="ATP_grasp_subdomain_1"/>
</dbReference>
<dbReference type="InterPro" id="IPR016185">
    <property type="entry name" value="PreATP-grasp_dom_sf"/>
</dbReference>
<dbReference type="InterPro" id="IPR020561">
    <property type="entry name" value="PRibGlycinamid_synth_ATP-grasp"/>
</dbReference>
<dbReference type="InterPro" id="IPR000115">
    <property type="entry name" value="PRibGlycinamide_synth"/>
</dbReference>
<dbReference type="InterPro" id="IPR020560">
    <property type="entry name" value="PRibGlycinamide_synth_C-dom"/>
</dbReference>
<dbReference type="InterPro" id="IPR037123">
    <property type="entry name" value="PRibGlycinamide_synth_C_sf"/>
</dbReference>
<dbReference type="InterPro" id="IPR020559">
    <property type="entry name" value="PRibGlycinamide_synth_CS"/>
</dbReference>
<dbReference type="InterPro" id="IPR020562">
    <property type="entry name" value="PRibGlycinamide_synth_N"/>
</dbReference>
<dbReference type="InterPro" id="IPR011054">
    <property type="entry name" value="Rudment_hybrid_motif"/>
</dbReference>
<dbReference type="NCBIfam" id="TIGR00877">
    <property type="entry name" value="purD"/>
    <property type="match status" value="1"/>
</dbReference>
<dbReference type="PANTHER" id="PTHR43472">
    <property type="entry name" value="PHOSPHORIBOSYLAMINE--GLYCINE LIGASE"/>
    <property type="match status" value="1"/>
</dbReference>
<dbReference type="PANTHER" id="PTHR43472:SF1">
    <property type="entry name" value="PHOSPHORIBOSYLAMINE--GLYCINE LIGASE, CHLOROPLASTIC"/>
    <property type="match status" value="1"/>
</dbReference>
<dbReference type="Pfam" id="PF01071">
    <property type="entry name" value="GARS_A"/>
    <property type="match status" value="1"/>
</dbReference>
<dbReference type="Pfam" id="PF02843">
    <property type="entry name" value="GARS_C"/>
    <property type="match status" value="1"/>
</dbReference>
<dbReference type="Pfam" id="PF02844">
    <property type="entry name" value="GARS_N"/>
    <property type="match status" value="1"/>
</dbReference>
<dbReference type="SMART" id="SM01209">
    <property type="entry name" value="GARS_A"/>
    <property type="match status" value="1"/>
</dbReference>
<dbReference type="SMART" id="SM01210">
    <property type="entry name" value="GARS_C"/>
    <property type="match status" value="1"/>
</dbReference>
<dbReference type="SUPFAM" id="SSF56059">
    <property type="entry name" value="Glutathione synthetase ATP-binding domain-like"/>
    <property type="match status" value="1"/>
</dbReference>
<dbReference type="SUPFAM" id="SSF52440">
    <property type="entry name" value="PreATP-grasp domain"/>
    <property type="match status" value="1"/>
</dbReference>
<dbReference type="SUPFAM" id="SSF51246">
    <property type="entry name" value="Rudiment single hybrid motif"/>
    <property type="match status" value="1"/>
</dbReference>
<dbReference type="PROSITE" id="PS50975">
    <property type="entry name" value="ATP_GRASP"/>
    <property type="match status" value="1"/>
</dbReference>
<dbReference type="PROSITE" id="PS00184">
    <property type="entry name" value="GARS"/>
    <property type="match status" value="1"/>
</dbReference>
<sequence length="431" mass="44849">MKILVIGSGGREHALAWKIAQSARVSEVLVAPGNAGTATEAKCRNVAIKVDDLDGLLALAQREAVALTVVGPEVPLVLGVVDRFHAAGLRIFGPTAKAAQLEGSKAFAKDFLARHGIPTAYYAVHTEVDAALAYVREKGAPIVVKADGLAAGKGVIVAMTLGEAEDAVRDMLSGNAFGDAGARVVIEEFLDGEEASFISMVDGTHALPMATSQDHKRVGDGDTGPNTGGMGAYSPAPVVTPEVHARVMREVVEPTVQGMIADGVPFTGFLYAGLMIDAHGAPKVIEFNVRFGDPETQPVMLRLQSDLVDLVEAAIDGTLDAAQAQWDPRPSLGVVIAAKPYPETPVTGEVITGLDAVPASAKVFHAGTALNAEGQVISAGGRVLCVAALGDSVLDAQRTAYAGLQPIQWASAFQRSDIGWRAIARERDAQA</sequence>
<evidence type="ECO:0000250" key="1"/>
<evidence type="ECO:0000255" key="2">
    <source>
        <dbReference type="HAMAP-Rule" id="MF_00138"/>
    </source>
</evidence>